<gene>
    <name evidence="1" type="primary">psbJ</name>
</gene>
<comment type="function">
    <text evidence="1">One of the components of the core complex of photosystem II (PSII). PSII is a light-driven water:plastoquinone oxidoreductase that uses light energy to abstract electrons from H(2)O, generating O(2) and a proton gradient subsequently used for ATP formation. It consists of a core antenna complex that captures photons, and an electron transfer chain that converts photonic excitation into a charge separation.</text>
</comment>
<comment type="subunit">
    <text evidence="1">PSII is composed of 1 copy each of membrane proteins PsbA, PsbB, PsbC, PsbD, PsbE, PsbF, PsbH, PsbI, PsbJ, PsbK, PsbL, PsbM, PsbT, PsbX, PsbY, PsbZ, Psb30/Ycf12, at least 3 peripheral proteins of the oxygen-evolving complex and a large number of cofactors. It forms dimeric complexes.</text>
</comment>
<comment type="subcellular location">
    <subcellularLocation>
        <location evidence="1">Plastid</location>
        <location evidence="1">Chloroplast thylakoid membrane</location>
        <topology evidence="1">Single-pass membrane protein</topology>
    </subcellularLocation>
</comment>
<comment type="similarity">
    <text evidence="1">Belongs to the PsbJ family.</text>
</comment>
<evidence type="ECO:0000255" key="1">
    <source>
        <dbReference type="HAMAP-Rule" id="MF_01305"/>
    </source>
</evidence>
<protein>
    <recommendedName>
        <fullName evidence="1">Photosystem II reaction center protein J</fullName>
        <shortName evidence="1">PSII-J</shortName>
    </recommendedName>
</protein>
<dbReference type="EMBL" id="AP009375">
    <property type="protein sequence ID" value="BAF50563.1"/>
    <property type="molecule type" value="Genomic_DNA"/>
</dbReference>
<dbReference type="RefSeq" id="YP_001123739.1">
    <property type="nucleotide sequence ID" value="NC_009274.1"/>
</dbReference>
<dbReference type="SMR" id="A4QLK8"/>
<dbReference type="GeneID" id="4964821"/>
<dbReference type="GO" id="GO:0009535">
    <property type="term" value="C:chloroplast thylakoid membrane"/>
    <property type="evidence" value="ECO:0007669"/>
    <property type="project" value="UniProtKB-SubCell"/>
</dbReference>
<dbReference type="GO" id="GO:0009539">
    <property type="term" value="C:photosystem II reaction center"/>
    <property type="evidence" value="ECO:0007669"/>
    <property type="project" value="InterPro"/>
</dbReference>
<dbReference type="GO" id="GO:0015979">
    <property type="term" value="P:photosynthesis"/>
    <property type="evidence" value="ECO:0007669"/>
    <property type="project" value="UniProtKB-UniRule"/>
</dbReference>
<dbReference type="Gene3D" id="6.10.250.2070">
    <property type="match status" value="1"/>
</dbReference>
<dbReference type="HAMAP" id="MF_01305">
    <property type="entry name" value="PSII_PsbJ"/>
    <property type="match status" value="1"/>
</dbReference>
<dbReference type="InterPro" id="IPR002682">
    <property type="entry name" value="PSII_PsbJ"/>
</dbReference>
<dbReference type="InterPro" id="IPR037267">
    <property type="entry name" value="PSII_PsbJ_sf"/>
</dbReference>
<dbReference type="NCBIfam" id="NF002722">
    <property type="entry name" value="PRK02565.1"/>
    <property type="match status" value="1"/>
</dbReference>
<dbReference type="PANTHER" id="PTHR34812">
    <property type="entry name" value="PHOTOSYSTEM II REACTION CENTER PROTEIN J"/>
    <property type="match status" value="1"/>
</dbReference>
<dbReference type="PANTHER" id="PTHR34812:SF3">
    <property type="entry name" value="PHOTOSYSTEM II REACTION CENTER PROTEIN J"/>
    <property type="match status" value="1"/>
</dbReference>
<dbReference type="Pfam" id="PF01788">
    <property type="entry name" value="PsbJ"/>
    <property type="match status" value="1"/>
</dbReference>
<dbReference type="SUPFAM" id="SSF161021">
    <property type="entry name" value="Photosystem II reaction center protein J, PsbJ"/>
    <property type="match status" value="1"/>
</dbReference>
<accession>A4QLK8</accession>
<name>PSBJ_LOBMA</name>
<sequence length="40" mass="4117">MADTTGRIPLWVIGTVAGILVIGIIGIFFYGSYSGLGSSL</sequence>
<proteinExistence type="inferred from homology"/>
<geneLocation type="chloroplast"/>
<reference key="1">
    <citation type="submission" date="2007-03" db="EMBL/GenBank/DDBJ databases">
        <title>Sequencing analysis of Lobularia maritima chloroplast DNA.</title>
        <authorList>
            <person name="Hosouchi T."/>
            <person name="Tsuruoka H."/>
            <person name="Kotani H."/>
        </authorList>
    </citation>
    <scope>NUCLEOTIDE SEQUENCE [LARGE SCALE GENOMIC DNA]</scope>
</reference>
<feature type="chain" id="PRO_0000292254" description="Photosystem II reaction center protein J">
    <location>
        <begin position="1"/>
        <end position="40"/>
    </location>
</feature>
<feature type="transmembrane region" description="Helical" evidence="1">
    <location>
        <begin position="8"/>
        <end position="28"/>
    </location>
</feature>
<organism>
    <name type="scientific">Lobularia maritima</name>
    <name type="common">Sweet alyssum</name>
    <name type="synonym">Alyssum maritimum</name>
    <dbReference type="NCBI Taxonomy" id="226051"/>
    <lineage>
        <taxon>Eukaryota</taxon>
        <taxon>Viridiplantae</taxon>
        <taxon>Streptophyta</taxon>
        <taxon>Embryophyta</taxon>
        <taxon>Tracheophyta</taxon>
        <taxon>Spermatophyta</taxon>
        <taxon>Magnoliopsida</taxon>
        <taxon>eudicotyledons</taxon>
        <taxon>Gunneridae</taxon>
        <taxon>Pentapetalae</taxon>
        <taxon>rosids</taxon>
        <taxon>malvids</taxon>
        <taxon>Brassicales</taxon>
        <taxon>Brassicaceae</taxon>
        <taxon>Anastaticeae</taxon>
        <taxon>Lobularia</taxon>
    </lineage>
</organism>
<keyword id="KW-0150">Chloroplast</keyword>
<keyword id="KW-0472">Membrane</keyword>
<keyword id="KW-0602">Photosynthesis</keyword>
<keyword id="KW-0604">Photosystem II</keyword>
<keyword id="KW-0934">Plastid</keyword>
<keyword id="KW-0674">Reaction center</keyword>
<keyword id="KW-0793">Thylakoid</keyword>
<keyword id="KW-0812">Transmembrane</keyword>
<keyword id="KW-1133">Transmembrane helix</keyword>